<organism>
    <name type="scientific">Chloranthus spicatus</name>
    <name type="common">Chulantree</name>
    <name type="synonym">Nigrina spicata</name>
    <dbReference type="NCBI Taxonomy" id="13006"/>
    <lineage>
        <taxon>Eukaryota</taxon>
        <taxon>Viridiplantae</taxon>
        <taxon>Streptophyta</taxon>
        <taxon>Embryophyta</taxon>
        <taxon>Tracheophyta</taxon>
        <taxon>Spermatophyta</taxon>
        <taxon>Magnoliopsida</taxon>
        <taxon>Chloranthales</taxon>
        <taxon>Chloranthaceae</taxon>
        <taxon>Chloranthus</taxon>
    </lineage>
</organism>
<reference key="1">
    <citation type="journal article" date="2007" name="Mol. Phylogenet. Evol.">
        <title>Phylogenetic and evolutionary implications of complete chloroplast genome sequences of four early-diverging angiosperms: Buxus (Buxaceae), Chloranthus (Chloranthaceae), Dioscorea (Dioscoreaceae), and Illicium (Schisandraceae).</title>
        <authorList>
            <person name="Hansen D.R."/>
            <person name="Dastidar S.G."/>
            <person name="Cai Z."/>
            <person name="Penaflor C."/>
            <person name="Kuehl J.V."/>
            <person name="Boore J.L."/>
            <person name="Jansen R.K."/>
        </authorList>
    </citation>
    <scope>NUCLEOTIDE SEQUENCE [LARGE SCALE GENOMIC DNA]</scope>
</reference>
<sequence>MSHSVKIYDTCIGCTQCVRACPTDVLEMIPWDGCKAKQIAPAPRTEDCVGCKRCESACPTDFLSVRVYLSNETTRSMGLAY</sequence>
<dbReference type="EC" id="1.97.1.12" evidence="1"/>
<dbReference type="EMBL" id="EF380352">
    <property type="protein sequence ID" value="ABQ43313.1"/>
    <property type="molecule type" value="Genomic_DNA"/>
</dbReference>
<dbReference type="RefSeq" id="YP_001294152.1">
    <property type="nucleotide sequence ID" value="NC_009598.1"/>
</dbReference>
<dbReference type="SMR" id="A6MMH6"/>
<dbReference type="GeneID" id="5236502"/>
<dbReference type="GO" id="GO:0009535">
    <property type="term" value="C:chloroplast thylakoid membrane"/>
    <property type="evidence" value="ECO:0007669"/>
    <property type="project" value="UniProtKB-SubCell"/>
</dbReference>
<dbReference type="GO" id="GO:0009522">
    <property type="term" value="C:photosystem I"/>
    <property type="evidence" value="ECO:0007669"/>
    <property type="project" value="UniProtKB-KW"/>
</dbReference>
<dbReference type="GO" id="GO:0051539">
    <property type="term" value="F:4 iron, 4 sulfur cluster binding"/>
    <property type="evidence" value="ECO:0007669"/>
    <property type="project" value="UniProtKB-KW"/>
</dbReference>
<dbReference type="GO" id="GO:0009055">
    <property type="term" value="F:electron transfer activity"/>
    <property type="evidence" value="ECO:0007669"/>
    <property type="project" value="UniProtKB-UniRule"/>
</dbReference>
<dbReference type="GO" id="GO:0046872">
    <property type="term" value="F:metal ion binding"/>
    <property type="evidence" value="ECO:0007669"/>
    <property type="project" value="UniProtKB-KW"/>
</dbReference>
<dbReference type="GO" id="GO:0016491">
    <property type="term" value="F:oxidoreductase activity"/>
    <property type="evidence" value="ECO:0007669"/>
    <property type="project" value="UniProtKB-KW"/>
</dbReference>
<dbReference type="GO" id="GO:0009773">
    <property type="term" value="P:photosynthetic electron transport in photosystem I"/>
    <property type="evidence" value="ECO:0007669"/>
    <property type="project" value="InterPro"/>
</dbReference>
<dbReference type="FunFam" id="3.30.70.20:FF:000001">
    <property type="entry name" value="Photosystem I iron-sulfur center"/>
    <property type="match status" value="1"/>
</dbReference>
<dbReference type="Gene3D" id="3.30.70.20">
    <property type="match status" value="1"/>
</dbReference>
<dbReference type="HAMAP" id="MF_01303">
    <property type="entry name" value="PSI_PsaC"/>
    <property type="match status" value="1"/>
</dbReference>
<dbReference type="InterPro" id="IPR017896">
    <property type="entry name" value="4Fe4S_Fe-S-bd"/>
</dbReference>
<dbReference type="InterPro" id="IPR017900">
    <property type="entry name" value="4Fe4S_Fe_S_CS"/>
</dbReference>
<dbReference type="InterPro" id="IPR050157">
    <property type="entry name" value="PSI_iron-sulfur_center"/>
</dbReference>
<dbReference type="InterPro" id="IPR017491">
    <property type="entry name" value="PSI_PsaC"/>
</dbReference>
<dbReference type="NCBIfam" id="TIGR03048">
    <property type="entry name" value="PS_I_psaC"/>
    <property type="match status" value="1"/>
</dbReference>
<dbReference type="PANTHER" id="PTHR24960:SF79">
    <property type="entry name" value="PHOTOSYSTEM I IRON-SULFUR CENTER"/>
    <property type="match status" value="1"/>
</dbReference>
<dbReference type="PANTHER" id="PTHR24960">
    <property type="entry name" value="PHOTOSYSTEM I IRON-SULFUR CENTER-RELATED"/>
    <property type="match status" value="1"/>
</dbReference>
<dbReference type="Pfam" id="PF12838">
    <property type="entry name" value="Fer4_7"/>
    <property type="match status" value="1"/>
</dbReference>
<dbReference type="SUPFAM" id="SSF54862">
    <property type="entry name" value="4Fe-4S ferredoxins"/>
    <property type="match status" value="1"/>
</dbReference>
<dbReference type="PROSITE" id="PS00198">
    <property type="entry name" value="4FE4S_FER_1"/>
    <property type="match status" value="2"/>
</dbReference>
<dbReference type="PROSITE" id="PS51379">
    <property type="entry name" value="4FE4S_FER_2"/>
    <property type="match status" value="2"/>
</dbReference>
<keyword id="KW-0004">4Fe-4S</keyword>
<keyword id="KW-0150">Chloroplast</keyword>
<keyword id="KW-0249">Electron transport</keyword>
<keyword id="KW-0408">Iron</keyword>
<keyword id="KW-0411">Iron-sulfur</keyword>
<keyword id="KW-0472">Membrane</keyword>
<keyword id="KW-0479">Metal-binding</keyword>
<keyword id="KW-0560">Oxidoreductase</keyword>
<keyword id="KW-0602">Photosynthesis</keyword>
<keyword id="KW-0603">Photosystem I</keyword>
<keyword id="KW-0934">Plastid</keyword>
<keyword id="KW-0677">Repeat</keyword>
<keyword id="KW-0793">Thylakoid</keyword>
<keyword id="KW-0813">Transport</keyword>
<comment type="function">
    <text evidence="1">Apoprotein for the two 4Fe-4S centers FA and FB of photosystem I (PSI); essential for photochemical activity. FB is the terminal electron acceptor of PSI, donating electrons to ferredoxin. The C-terminus interacts with PsaA/B/D and helps assemble the protein into the PSI complex. Required for binding of PsaD and PsaE to PSI. PSI is a plastocyanin-ferredoxin oxidoreductase, converting photonic excitation into a charge separation, which transfers an electron from the donor P700 chlorophyll pair to the spectroscopically characterized acceptors A0, A1, FX, FA and FB in turn.</text>
</comment>
<comment type="catalytic activity">
    <reaction evidence="1">
        <text>reduced [plastocyanin] + hnu + oxidized [2Fe-2S]-[ferredoxin] = oxidized [plastocyanin] + reduced [2Fe-2S]-[ferredoxin]</text>
        <dbReference type="Rhea" id="RHEA:30407"/>
        <dbReference type="Rhea" id="RHEA-COMP:10000"/>
        <dbReference type="Rhea" id="RHEA-COMP:10001"/>
        <dbReference type="Rhea" id="RHEA-COMP:10039"/>
        <dbReference type="Rhea" id="RHEA-COMP:10040"/>
        <dbReference type="ChEBI" id="CHEBI:29036"/>
        <dbReference type="ChEBI" id="CHEBI:30212"/>
        <dbReference type="ChEBI" id="CHEBI:33737"/>
        <dbReference type="ChEBI" id="CHEBI:33738"/>
        <dbReference type="ChEBI" id="CHEBI:49552"/>
        <dbReference type="EC" id="1.97.1.12"/>
    </reaction>
</comment>
<comment type="cofactor">
    <cofactor evidence="1">
        <name>[4Fe-4S] cluster</name>
        <dbReference type="ChEBI" id="CHEBI:49883"/>
    </cofactor>
    <text evidence="1">Binds 2 [4Fe-4S] clusters. Cluster 2 is most probably the spectroscopically characterized electron acceptor FA and cluster 1 is most probably FB.</text>
</comment>
<comment type="subunit">
    <text evidence="1">The eukaryotic PSI reaction center is composed of at least 11 subunits.</text>
</comment>
<comment type="subcellular location">
    <subcellularLocation>
        <location evidence="1">Plastid</location>
        <location evidence="1">Chloroplast thylakoid membrane</location>
        <topology evidence="1">Peripheral membrane protein</topology>
        <orientation evidence="1">Stromal side</orientation>
    </subcellularLocation>
</comment>
<gene>
    <name evidence="1" type="primary">psaC</name>
</gene>
<evidence type="ECO:0000255" key="1">
    <source>
        <dbReference type="HAMAP-Rule" id="MF_01303"/>
    </source>
</evidence>
<proteinExistence type="inferred from homology"/>
<geneLocation type="chloroplast"/>
<protein>
    <recommendedName>
        <fullName evidence="1">Photosystem I iron-sulfur center</fullName>
        <ecNumber evidence="1">1.97.1.12</ecNumber>
    </recommendedName>
    <alternativeName>
        <fullName evidence="1">9 kDa polypeptide</fullName>
    </alternativeName>
    <alternativeName>
        <fullName evidence="1">PSI-C</fullName>
    </alternativeName>
    <alternativeName>
        <fullName evidence="1">Photosystem I subunit VII</fullName>
    </alternativeName>
    <alternativeName>
        <fullName evidence="1">PsaC</fullName>
    </alternativeName>
</protein>
<name>PSAC_CHLSC</name>
<accession>A6MMH6</accession>
<feature type="chain" id="PRO_0000322034" description="Photosystem I iron-sulfur center">
    <location>
        <begin position="1"/>
        <end position="81"/>
    </location>
</feature>
<feature type="domain" description="4Fe-4S ferredoxin-type 1" evidence="1">
    <location>
        <begin position="2"/>
        <end position="31"/>
    </location>
</feature>
<feature type="domain" description="4Fe-4S ferredoxin-type 2" evidence="1">
    <location>
        <begin position="39"/>
        <end position="68"/>
    </location>
</feature>
<feature type="binding site" evidence="1">
    <location>
        <position position="11"/>
    </location>
    <ligand>
        <name>[4Fe-4S] cluster</name>
        <dbReference type="ChEBI" id="CHEBI:49883"/>
        <label>1</label>
    </ligand>
</feature>
<feature type="binding site" evidence="1">
    <location>
        <position position="14"/>
    </location>
    <ligand>
        <name>[4Fe-4S] cluster</name>
        <dbReference type="ChEBI" id="CHEBI:49883"/>
        <label>1</label>
    </ligand>
</feature>
<feature type="binding site" evidence="1">
    <location>
        <position position="17"/>
    </location>
    <ligand>
        <name>[4Fe-4S] cluster</name>
        <dbReference type="ChEBI" id="CHEBI:49883"/>
        <label>1</label>
    </ligand>
</feature>
<feature type="binding site" evidence="1">
    <location>
        <position position="21"/>
    </location>
    <ligand>
        <name>[4Fe-4S] cluster</name>
        <dbReference type="ChEBI" id="CHEBI:49883"/>
        <label>2</label>
    </ligand>
</feature>
<feature type="binding site" evidence="1">
    <location>
        <position position="48"/>
    </location>
    <ligand>
        <name>[4Fe-4S] cluster</name>
        <dbReference type="ChEBI" id="CHEBI:49883"/>
        <label>2</label>
    </ligand>
</feature>
<feature type="binding site" evidence="1">
    <location>
        <position position="51"/>
    </location>
    <ligand>
        <name>[4Fe-4S] cluster</name>
        <dbReference type="ChEBI" id="CHEBI:49883"/>
        <label>2</label>
    </ligand>
</feature>
<feature type="binding site" evidence="1">
    <location>
        <position position="54"/>
    </location>
    <ligand>
        <name>[4Fe-4S] cluster</name>
        <dbReference type="ChEBI" id="CHEBI:49883"/>
        <label>2</label>
    </ligand>
</feature>
<feature type="binding site" evidence="1">
    <location>
        <position position="58"/>
    </location>
    <ligand>
        <name>[4Fe-4S] cluster</name>
        <dbReference type="ChEBI" id="CHEBI:49883"/>
        <label>1</label>
    </ligand>
</feature>